<keyword id="KW-0067">ATP-binding</keyword>
<keyword id="KW-0315">Glutamine amidotransferase</keyword>
<keyword id="KW-0436">Ligase</keyword>
<keyword id="KW-0460">Magnesium</keyword>
<keyword id="KW-0479">Metal-binding</keyword>
<keyword id="KW-0547">Nucleotide-binding</keyword>
<keyword id="KW-0665">Pyrimidine biosynthesis</keyword>
<keyword id="KW-1185">Reference proteome</keyword>
<proteinExistence type="inferred from homology"/>
<evidence type="ECO:0000255" key="1">
    <source>
        <dbReference type="HAMAP-Rule" id="MF_01227"/>
    </source>
</evidence>
<accession>B7KF08</accession>
<reference key="1">
    <citation type="journal article" date="2011" name="MBio">
        <title>Novel metabolic attributes of the genus Cyanothece, comprising a group of unicellular nitrogen-fixing Cyanobacteria.</title>
        <authorList>
            <person name="Bandyopadhyay A."/>
            <person name="Elvitigala T."/>
            <person name="Welsh E."/>
            <person name="Stockel J."/>
            <person name="Liberton M."/>
            <person name="Min H."/>
            <person name="Sherman L.A."/>
            <person name="Pakrasi H.B."/>
        </authorList>
    </citation>
    <scope>NUCLEOTIDE SEQUENCE [LARGE SCALE GENOMIC DNA]</scope>
    <source>
        <strain>PCC 7424</strain>
    </source>
</reference>
<gene>
    <name evidence="1" type="primary">pyrG</name>
    <name type="ordered locus">PCC7424_2034</name>
</gene>
<feature type="chain" id="PRO_1000139431" description="CTP synthase">
    <location>
        <begin position="1"/>
        <end position="558"/>
    </location>
</feature>
<feature type="domain" description="Glutamine amidotransferase type-1" evidence="1">
    <location>
        <begin position="292"/>
        <end position="534"/>
    </location>
</feature>
<feature type="region of interest" description="Amidoligase domain" evidence="1">
    <location>
        <begin position="1"/>
        <end position="267"/>
    </location>
</feature>
<feature type="active site" description="Nucleophile; for glutamine hydrolysis" evidence="1">
    <location>
        <position position="381"/>
    </location>
</feature>
<feature type="active site" evidence="1">
    <location>
        <position position="507"/>
    </location>
</feature>
<feature type="active site" evidence="1">
    <location>
        <position position="509"/>
    </location>
</feature>
<feature type="binding site" evidence="1">
    <location>
        <position position="13"/>
    </location>
    <ligand>
        <name>CTP</name>
        <dbReference type="ChEBI" id="CHEBI:37563"/>
        <note>allosteric inhibitor</note>
    </ligand>
</feature>
<feature type="binding site" evidence="1">
    <location>
        <position position="13"/>
    </location>
    <ligand>
        <name>UTP</name>
        <dbReference type="ChEBI" id="CHEBI:46398"/>
    </ligand>
</feature>
<feature type="binding site" evidence="1">
    <location>
        <begin position="14"/>
        <end position="19"/>
    </location>
    <ligand>
        <name>ATP</name>
        <dbReference type="ChEBI" id="CHEBI:30616"/>
    </ligand>
</feature>
<feature type="binding site" evidence="1">
    <location>
        <position position="71"/>
    </location>
    <ligand>
        <name>ATP</name>
        <dbReference type="ChEBI" id="CHEBI:30616"/>
    </ligand>
</feature>
<feature type="binding site" evidence="1">
    <location>
        <position position="71"/>
    </location>
    <ligand>
        <name>Mg(2+)</name>
        <dbReference type="ChEBI" id="CHEBI:18420"/>
    </ligand>
</feature>
<feature type="binding site" evidence="1">
    <location>
        <position position="141"/>
    </location>
    <ligand>
        <name>Mg(2+)</name>
        <dbReference type="ChEBI" id="CHEBI:18420"/>
    </ligand>
</feature>
<feature type="binding site" evidence="1">
    <location>
        <begin position="148"/>
        <end position="150"/>
    </location>
    <ligand>
        <name>CTP</name>
        <dbReference type="ChEBI" id="CHEBI:37563"/>
        <note>allosteric inhibitor</note>
    </ligand>
</feature>
<feature type="binding site" evidence="1">
    <location>
        <begin position="188"/>
        <end position="193"/>
    </location>
    <ligand>
        <name>CTP</name>
        <dbReference type="ChEBI" id="CHEBI:37563"/>
        <note>allosteric inhibitor</note>
    </ligand>
</feature>
<feature type="binding site" evidence="1">
    <location>
        <begin position="188"/>
        <end position="193"/>
    </location>
    <ligand>
        <name>UTP</name>
        <dbReference type="ChEBI" id="CHEBI:46398"/>
    </ligand>
</feature>
<feature type="binding site" evidence="1">
    <location>
        <position position="224"/>
    </location>
    <ligand>
        <name>CTP</name>
        <dbReference type="ChEBI" id="CHEBI:37563"/>
        <note>allosteric inhibitor</note>
    </ligand>
</feature>
<feature type="binding site" evidence="1">
    <location>
        <position position="224"/>
    </location>
    <ligand>
        <name>UTP</name>
        <dbReference type="ChEBI" id="CHEBI:46398"/>
    </ligand>
</feature>
<feature type="binding site" evidence="1">
    <location>
        <position position="354"/>
    </location>
    <ligand>
        <name>L-glutamine</name>
        <dbReference type="ChEBI" id="CHEBI:58359"/>
    </ligand>
</feature>
<feature type="binding site" evidence="1">
    <location>
        <begin position="382"/>
        <end position="385"/>
    </location>
    <ligand>
        <name>L-glutamine</name>
        <dbReference type="ChEBI" id="CHEBI:58359"/>
    </ligand>
</feature>
<feature type="binding site" evidence="1">
    <location>
        <position position="405"/>
    </location>
    <ligand>
        <name>L-glutamine</name>
        <dbReference type="ChEBI" id="CHEBI:58359"/>
    </ligand>
</feature>
<feature type="binding site" evidence="1">
    <location>
        <position position="462"/>
    </location>
    <ligand>
        <name>L-glutamine</name>
        <dbReference type="ChEBI" id="CHEBI:58359"/>
    </ligand>
</feature>
<sequence length="558" mass="62080">MTKFVFVTGGVVSSIGKGIVAASLGRLFKSRDYSVSILKLDPYINVDPGTMSPFQHGEVFVTDDGAETDLDLGHYERFTDTPMSRLNSVTTGSIYQAVINKERRGDYMGGTVQVIPHITNEIKERIHRVAKNTNPDIVIIEIGGTVGDIESLPFLEAIRQFRKEVGRNNVVYMHVTLIPWIPAAGEMKTKPTQHSVKELRSIGIQPDVLVCRCDRPLQPGLKEKLSAFCDVPVASVIMSQDASTIYQVPLNLEEEGLAQQTLELLNLEPRQPDLSQWRTLVQQMQSPSKQIEVALVGKYVQLSDAYLSVVEALGHAAIATNSVVKIRWVSAEDLENDSAEQHLEGVSGIVVPGGFGVRGVDGKVRAIEYARHHNIPFLGLCMGMQCSVIEWARNIAHLEKANSAEFDRESPNPVINLLPEQQDVVDLGGTMRLGLYPCRLTPDTQTFALYKQEVVYERHRHRYEFNNAYRSLFLETGYVISGTSPDGRLVEIIELPGHPFFIATQFHPEFRSRPSTPHPLFLGFVKASVDYNHVSLDSKIQTHIELVTEENTPSIALG</sequence>
<dbReference type="EC" id="6.3.4.2" evidence="1"/>
<dbReference type="EMBL" id="CP001291">
    <property type="protein sequence ID" value="ACK70464.1"/>
    <property type="molecule type" value="Genomic_DNA"/>
</dbReference>
<dbReference type="RefSeq" id="WP_015954070.1">
    <property type="nucleotide sequence ID" value="NC_011729.1"/>
</dbReference>
<dbReference type="SMR" id="B7KF08"/>
<dbReference type="STRING" id="65393.PCC7424_2034"/>
<dbReference type="MEROPS" id="C26.964"/>
<dbReference type="KEGG" id="cyc:PCC7424_2034"/>
<dbReference type="eggNOG" id="COG0504">
    <property type="taxonomic scope" value="Bacteria"/>
</dbReference>
<dbReference type="HOGENOM" id="CLU_011675_5_0_3"/>
<dbReference type="OrthoDB" id="9801107at2"/>
<dbReference type="UniPathway" id="UPA00159">
    <property type="reaction ID" value="UER00277"/>
</dbReference>
<dbReference type="Proteomes" id="UP000002384">
    <property type="component" value="Chromosome"/>
</dbReference>
<dbReference type="GO" id="GO:0005829">
    <property type="term" value="C:cytosol"/>
    <property type="evidence" value="ECO:0007669"/>
    <property type="project" value="TreeGrafter"/>
</dbReference>
<dbReference type="GO" id="GO:0005524">
    <property type="term" value="F:ATP binding"/>
    <property type="evidence" value="ECO:0007669"/>
    <property type="project" value="UniProtKB-KW"/>
</dbReference>
<dbReference type="GO" id="GO:0003883">
    <property type="term" value="F:CTP synthase activity"/>
    <property type="evidence" value="ECO:0007669"/>
    <property type="project" value="UniProtKB-UniRule"/>
</dbReference>
<dbReference type="GO" id="GO:0004359">
    <property type="term" value="F:glutaminase activity"/>
    <property type="evidence" value="ECO:0007669"/>
    <property type="project" value="RHEA"/>
</dbReference>
<dbReference type="GO" id="GO:0042802">
    <property type="term" value="F:identical protein binding"/>
    <property type="evidence" value="ECO:0007669"/>
    <property type="project" value="TreeGrafter"/>
</dbReference>
<dbReference type="GO" id="GO:0046872">
    <property type="term" value="F:metal ion binding"/>
    <property type="evidence" value="ECO:0007669"/>
    <property type="project" value="UniProtKB-KW"/>
</dbReference>
<dbReference type="GO" id="GO:0044210">
    <property type="term" value="P:'de novo' CTP biosynthetic process"/>
    <property type="evidence" value="ECO:0007669"/>
    <property type="project" value="UniProtKB-UniRule"/>
</dbReference>
<dbReference type="GO" id="GO:0019856">
    <property type="term" value="P:pyrimidine nucleobase biosynthetic process"/>
    <property type="evidence" value="ECO:0007669"/>
    <property type="project" value="TreeGrafter"/>
</dbReference>
<dbReference type="CDD" id="cd03113">
    <property type="entry name" value="CTPS_N"/>
    <property type="match status" value="1"/>
</dbReference>
<dbReference type="CDD" id="cd01746">
    <property type="entry name" value="GATase1_CTP_Synthase"/>
    <property type="match status" value="1"/>
</dbReference>
<dbReference type="FunFam" id="3.40.50.300:FF:000009">
    <property type="entry name" value="CTP synthase"/>
    <property type="match status" value="1"/>
</dbReference>
<dbReference type="FunFam" id="3.40.50.880:FF:000002">
    <property type="entry name" value="CTP synthase"/>
    <property type="match status" value="1"/>
</dbReference>
<dbReference type="Gene3D" id="3.40.50.880">
    <property type="match status" value="1"/>
</dbReference>
<dbReference type="Gene3D" id="3.40.50.300">
    <property type="entry name" value="P-loop containing nucleotide triphosphate hydrolases"/>
    <property type="match status" value="1"/>
</dbReference>
<dbReference type="HAMAP" id="MF_01227">
    <property type="entry name" value="PyrG"/>
    <property type="match status" value="1"/>
</dbReference>
<dbReference type="InterPro" id="IPR029062">
    <property type="entry name" value="Class_I_gatase-like"/>
</dbReference>
<dbReference type="InterPro" id="IPR004468">
    <property type="entry name" value="CTP_synthase"/>
</dbReference>
<dbReference type="InterPro" id="IPR017456">
    <property type="entry name" value="CTP_synthase_N"/>
</dbReference>
<dbReference type="InterPro" id="IPR017926">
    <property type="entry name" value="GATASE"/>
</dbReference>
<dbReference type="InterPro" id="IPR033828">
    <property type="entry name" value="GATase1_CTP_Synthase"/>
</dbReference>
<dbReference type="InterPro" id="IPR027417">
    <property type="entry name" value="P-loop_NTPase"/>
</dbReference>
<dbReference type="NCBIfam" id="NF003792">
    <property type="entry name" value="PRK05380.1"/>
    <property type="match status" value="1"/>
</dbReference>
<dbReference type="NCBIfam" id="TIGR00337">
    <property type="entry name" value="PyrG"/>
    <property type="match status" value="1"/>
</dbReference>
<dbReference type="PANTHER" id="PTHR11550">
    <property type="entry name" value="CTP SYNTHASE"/>
    <property type="match status" value="1"/>
</dbReference>
<dbReference type="PANTHER" id="PTHR11550:SF0">
    <property type="entry name" value="CTP SYNTHASE-RELATED"/>
    <property type="match status" value="1"/>
</dbReference>
<dbReference type="Pfam" id="PF06418">
    <property type="entry name" value="CTP_synth_N"/>
    <property type="match status" value="1"/>
</dbReference>
<dbReference type="Pfam" id="PF00117">
    <property type="entry name" value="GATase"/>
    <property type="match status" value="1"/>
</dbReference>
<dbReference type="SUPFAM" id="SSF52317">
    <property type="entry name" value="Class I glutamine amidotransferase-like"/>
    <property type="match status" value="1"/>
</dbReference>
<dbReference type="SUPFAM" id="SSF52540">
    <property type="entry name" value="P-loop containing nucleoside triphosphate hydrolases"/>
    <property type="match status" value="1"/>
</dbReference>
<dbReference type="PROSITE" id="PS51273">
    <property type="entry name" value="GATASE_TYPE_1"/>
    <property type="match status" value="1"/>
</dbReference>
<protein>
    <recommendedName>
        <fullName evidence="1">CTP synthase</fullName>
        <ecNumber evidence="1">6.3.4.2</ecNumber>
    </recommendedName>
    <alternativeName>
        <fullName evidence="1">Cytidine 5'-triphosphate synthase</fullName>
    </alternativeName>
    <alternativeName>
        <fullName evidence="1">Cytidine triphosphate synthetase</fullName>
        <shortName evidence="1">CTP synthetase</shortName>
        <shortName evidence="1">CTPS</shortName>
    </alternativeName>
    <alternativeName>
        <fullName evidence="1">UTP--ammonia ligase</fullName>
    </alternativeName>
</protein>
<comment type="function">
    <text evidence="1">Catalyzes the ATP-dependent amination of UTP to CTP with either L-glutamine or ammonia as the source of nitrogen. Regulates intracellular CTP levels through interactions with the four ribonucleotide triphosphates.</text>
</comment>
<comment type="catalytic activity">
    <reaction evidence="1">
        <text>UTP + L-glutamine + ATP + H2O = CTP + L-glutamate + ADP + phosphate + 2 H(+)</text>
        <dbReference type="Rhea" id="RHEA:26426"/>
        <dbReference type="ChEBI" id="CHEBI:15377"/>
        <dbReference type="ChEBI" id="CHEBI:15378"/>
        <dbReference type="ChEBI" id="CHEBI:29985"/>
        <dbReference type="ChEBI" id="CHEBI:30616"/>
        <dbReference type="ChEBI" id="CHEBI:37563"/>
        <dbReference type="ChEBI" id="CHEBI:43474"/>
        <dbReference type="ChEBI" id="CHEBI:46398"/>
        <dbReference type="ChEBI" id="CHEBI:58359"/>
        <dbReference type="ChEBI" id="CHEBI:456216"/>
        <dbReference type="EC" id="6.3.4.2"/>
    </reaction>
</comment>
<comment type="catalytic activity">
    <reaction evidence="1">
        <text>L-glutamine + H2O = L-glutamate + NH4(+)</text>
        <dbReference type="Rhea" id="RHEA:15889"/>
        <dbReference type="ChEBI" id="CHEBI:15377"/>
        <dbReference type="ChEBI" id="CHEBI:28938"/>
        <dbReference type="ChEBI" id="CHEBI:29985"/>
        <dbReference type="ChEBI" id="CHEBI:58359"/>
    </reaction>
</comment>
<comment type="catalytic activity">
    <reaction evidence="1">
        <text>UTP + NH4(+) + ATP = CTP + ADP + phosphate + 2 H(+)</text>
        <dbReference type="Rhea" id="RHEA:16597"/>
        <dbReference type="ChEBI" id="CHEBI:15378"/>
        <dbReference type="ChEBI" id="CHEBI:28938"/>
        <dbReference type="ChEBI" id="CHEBI:30616"/>
        <dbReference type="ChEBI" id="CHEBI:37563"/>
        <dbReference type="ChEBI" id="CHEBI:43474"/>
        <dbReference type="ChEBI" id="CHEBI:46398"/>
        <dbReference type="ChEBI" id="CHEBI:456216"/>
    </reaction>
</comment>
<comment type="activity regulation">
    <text evidence="1">Allosterically activated by GTP, when glutamine is the substrate; GTP has no effect on the reaction when ammonia is the substrate. The allosteric effector GTP functions by stabilizing the protein conformation that binds the tetrahedral intermediate(s) formed during glutamine hydrolysis. Inhibited by the product CTP, via allosteric rather than competitive inhibition.</text>
</comment>
<comment type="pathway">
    <text evidence="1">Pyrimidine metabolism; CTP biosynthesis via de novo pathway; CTP from UDP: step 2/2.</text>
</comment>
<comment type="subunit">
    <text evidence="1">Homotetramer.</text>
</comment>
<comment type="miscellaneous">
    <text evidence="1">CTPSs have evolved a hybrid strategy for distinguishing between UTP and CTP. The overlapping regions of the product feedback inhibitory and substrate sites recognize a common feature in both compounds, the triphosphate moiety. To differentiate isosteric substrate and product pyrimidine rings, an additional pocket far from the expected kinase/ligase catalytic site, specifically recognizes the cytosine and ribose portions of the product inhibitor.</text>
</comment>
<comment type="similarity">
    <text evidence="1">Belongs to the CTP synthase family.</text>
</comment>
<name>PYRG_GLOC7</name>
<organism>
    <name type="scientific">Gloeothece citriformis (strain PCC 7424)</name>
    <name type="common">Cyanothece sp. (strain PCC 7424)</name>
    <dbReference type="NCBI Taxonomy" id="65393"/>
    <lineage>
        <taxon>Bacteria</taxon>
        <taxon>Bacillati</taxon>
        <taxon>Cyanobacteriota</taxon>
        <taxon>Cyanophyceae</taxon>
        <taxon>Oscillatoriophycideae</taxon>
        <taxon>Chroococcales</taxon>
        <taxon>Aphanothecaceae</taxon>
        <taxon>Gloeothece</taxon>
        <taxon>Gloeothece citriformis</taxon>
    </lineage>
</organism>